<dbReference type="EMBL" id="Z93937">
    <property type="protein sequence ID" value="CAB07941.1"/>
    <property type="molecule type" value="Genomic_DNA"/>
</dbReference>
<dbReference type="EMBL" id="AL009126">
    <property type="protein sequence ID" value="CAB15148.1"/>
    <property type="molecule type" value="Genomic_DNA"/>
</dbReference>
<dbReference type="PIR" id="H70009">
    <property type="entry name" value="H70009"/>
</dbReference>
<dbReference type="RefSeq" id="NP_391037.1">
    <property type="nucleotide sequence ID" value="NC_000964.3"/>
</dbReference>
<dbReference type="RefSeq" id="WP_003228823.1">
    <property type="nucleotide sequence ID" value="NZ_OZ025638.1"/>
</dbReference>
<dbReference type="FunCoup" id="O05257">
    <property type="interactions" value="114"/>
</dbReference>
<dbReference type="STRING" id="224308.BSU31590"/>
<dbReference type="PaxDb" id="224308-BSU31590"/>
<dbReference type="DNASU" id="938856"/>
<dbReference type="EnsemblBacteria" id="CAB15148">
    <property type="protein sequence ID" value="CAB15148"/>
    <property type="gene ID" value="BSU_31590"/>
</dbReference>
<dbReference type="GeneID" id="938856"/>
<dbReference type="KEGG" id="bsu:BSU31590"/>
<dbReference type="PATRIC" id="fig|224308.179.peg.3424"/>
<dbReference type="InParanoid" id="O05257"/>
<dbReference type="OrthoDB" id="2890773at2"/>
<dbReference type="BioCyc" id="BSUB:BSU31590-MONOMER"/>
<dbReference type="Proteomes" id="UP000001570">
    <property type="component" value="Chromosome"/>
</dbReference>
<dbReference type="GO" id="GO:0016020">
    <property type="term" value="C:membrane"/>
    <property type="evidence" value="ECO:0007669"/>
    <property type="project" value="UniProtKB-SubCell"/>
</dbReference>
<accession>O05257</accession>
<keyword id="KW-0472">Membrane</keyword>
<keyword id="KW-1185">Reference proteome</keyword>
<keyword id="KW-0812">Transmembrane</keyword>
<keyword id="KW-1133">Transmembrane helix</keyword>
<comment type="subcellular location">
    <subcellularLocation>
        <location evidence="2">Membrane</location>
        <topology evidence="2">Single-pass membrane protein</topology>
    </subcellularLocation>
</comment>
<name>YUFS_BACSU</name>
<protein>
    <recommendedName>
        <fullName>Uncharacterized protein YufS</fullName>
    </recommendedName>
</protein>
<sequence>MKTKVVMCSGLFCSVFAGAFMLNQYDGRSGVAACDEWELYLLEHHLSARMSETESKDLPFGPREYIRIVNK</sequence>
<evidence type="ECO:0000255" key="1"/>
<evidence type="ECO:0000305" key="2"/>
<organism>
    <name type="scientific">Bacillus subtilis (strain 168)</name>
    <dbReference type="NCBI Taxonomy" id="224308"/>
    <lineage>
        <taxon>Bacteria</taxon>
        <taxon>Bacillati</taxon>
        <taxon>Bacillota</taxon>
        <taxon>Bacilli</taxon>
        <taxon>Bacillales</taxon>
        <taxon>Bacillaceae</taxon>
        <taxon>Bacillus</taxon>
    </lineage>
</organism>
<gene>
    <name type="primary">yufS</name>
    <name type="ordered locus">BSU31590</name>
</gene>
<feature type="chain" id="PRO_0000049917" description="Uncharacterized protein YufS">
    <location>
        <begin position="1"/>
        <end position="71"/>
    </location>
</feature>
<feature type="transmembrane region" description="Helical" evidence="1">
    <location>
        <begin position="5"/>
        <end position="22"/>
    </location>
</feature>
<reference key="1">
    <citation type="journal article" date="1997" name="Microbiology">
        <title>Analysis of the Bacillus subtilis genome: cloning and nucleotide sequence of a 62 kb region between 275 degrees (rrnB) and 284 degrees (pai).</title>
        <authorList>
            <person name="Oudega B."/>
            <person name="Koningstein G."/>
            <person name="Rodrigues L."/>
            <person name="de Sales Ramon M."/>
            <person name="Hilbert H."/>
            <person name="Duesterhoeft A."/>
            <person name="Pohl T.M."/>
            <person name="Weitzenegger T."/>
        </authorList>
    </citation>
    <scope>NUCLEOTIDE SEQUENCE [GENOMIC DNA]</scope>
    <source>
        <strain>168</strain>
    </source>
</reference>
<reference key="2">
    <citation type="journal article" date="1997" name="Nature">
        <title>The complete genome sequence of the Gram-positive bacterium Bacillus subtilis.</title>
        <authorList>
            <person name="Kunst F."/>
            <person name="Ogasawara N."/>
            <person name="Moszer I."/>
            <person name="Albertini A.M."/>
            <person name="Alloni G."/>
            <person name="Azevedo V."/>
            <person name="Bertero M.G."/>
            <person name="Bessieres P."/>
            <person name="Bolotin A."/>
            <person name="Borchert S."/>
            <person name="Borriss R."/>
            <person name="Boursier L."/>
            <person name="Brans A."/>
            <person name="Braun M."/>
            <person name="Brignell S.C."/>
            <person name="Bron S."/>
            <person name="Brouillet S."/>
            <person name="Bruschi C.V."/>
            <person name="Caldwell B."/>
            <person name="Capuano V."/>
            <person name="Carter N.M."/>
            <person name="Choi S.-K."/>
            <person name="Codani J.-J."/>
            <person name="Connerton I.F."/>
            <person name="Cummings N.J."/>
            <person name="Daniel R.A."/>
            <person name="Denizot F."/>
            <person name="Devine K.M."/>
            <person name="Duesterhoeft A."/>
            <person name="Ehrlich S.D."/>
            <person name="Emmerson P.T."/>
            <person name="Entian K.-D."/>
            <person name="Errington J."/>
            <person name="Fabret C."/>
            <person name="Ferrari E."/>
            <person name="Foulger D."/>
            <person name="Fritz C."/>
            <person name="Fujita M."/>
            <person name="Fujita Y."/>
            <person name="Fuma S."/>
            <person name="Galizzi A."/>
            <person name="Galleron N."/>
            <person name="Ghim S.-Y."/>
            <person name="Glaser P."/>
            <person name="Goffeau A."/>
            <person name="Golightly E.J."/>
            <person name="Grandi G."/>
            <person name="Guiseppi G."/>
            <person name="Guy B.J."/>
            <person name="Haga K."/>
            <person name="Haiech J."/>
            <person name="Harwood C.R."/>
            <person name="Henaut A."/>
            <person name="Hilbert H."/>
            <person name="Holsappel S."/>
            <person name="Hosono S."/>
            <person name="Hullo M.-F."/>
            <person name="Itaya M."/>
            <person name="Jones L.-M."/>
            <person name="Joris B."/>
            <person name="Karamata D."/>
            <person name="Kasahara Y."/>
            <person name="Klaerr-Blanchard M."/>
            <person name="Klein C."/>
            <person name="Kobayashi Y."/>
            <person name="Koetter P."/>
            <person name="Koningstein G."/>
            <person name="Krogh S."/>
            <person name="Kumano M."/>
            <person name="Kurita K."/>
            <person name="Lapidus A."/>
            <person name="Lardinois S."/>
            <person name="Lauber J."/>
            <person name="Lazarevic V."/>
            <person name="Lee S.-M."/>
            <person name="Levine A."/>
            <person name="Liu H."/>
            <person name="Masuda S."/>
            <person name="Mauel C."/>
            <person name="Medigue C."/>
            <person name="Medina N."/>
            <person name="Mellado R.P."/>
            <person name="Mizuno M."/>
            <person name="Moestl D."/>
            <person name="Nakai S."/>
            <person name="Noback M."/>
            <person name="Noone D."/>
            <person name="O'Reilly M."/>
            <person name="Ogawa K."/>
            <person name="Ogiwara A."/>
            <person name="Oudega B."/>
            <person name="Park S.-H."/>
            <person name="Parro V."/>
            <person name="Pohl T.M."/>
            <person name="Portetelle D."/>
            <person name="Porwollik S."/>
            <person name="Prescott A.M."/>
            <person name="Presecan E."/>
            <person name="Pujic P."/>
            <person name="Purnelle B."/>
            <person name="Rapoport G."/>
            <person name="Rey M."/>
            <person name="Reynolds S."/>
            <person name="Rieger M."/>
            <person name="Rivolta C."/>
            <person name="Rocha E."/>
            <person name="Roche B."/>
            <person name="Rose M."/>
            <person name="Sadaie Y."/>
            <person name="Sato T."/>
            <person name="Scanlan E."/>
            <person name="Schleich S."/>
            <person name="Schroeter R."/>
            <person name="Scoffone F."/>
            <person name="Sekiguchi J."/>
            <person name="Sekowska A."/>
            <person name="Seror S.J."/>
            <person name="Serror P."/>
            <person name="Shin B.-S."/>
            <person name="Soldo B."/>
            <person name="Sorokin A."/>
            <person name="Tacconi E."/>
            <person name="Takagi T."/>
            <person name="Takahashi H."/>
            <person name="Takemaru K."/>
            <person name="Takeuchi M."/>
            <person name="Tamakoshi A."/>
            <person name="Tanaka T."/>
            <person name="Terpstra P."/>
            <person name="Tognoni A."/>
            <person name="Tosato V."/>
            <person name="Uchiyama S."/>
            <person name="Vandenbol M."/>
            <person name="Vannier F."/>
            <person name="Vassarotti A."/>
            <person name="Viari A."/>
            <person name="Wambutt R."/>
            <person name="Wedler E."/>
            <person name="Wedler H."/>
            <person name="Weitzenegger T."/>
            <person name="Winters P."/>
            <person name="Wipat A."/>
            <person name="Yamamoto H."/>
            <person name="Yamane K."/>
            <person name="Yasumoto K."/>
            <person name="Yata K."/>
            <person name="Yoshida K."/>
            <person name="Yoshikawa H.-F."/>
            <person name="Zumstein E."/>
            <person name="Yoshikawa H."/>
            <person name="Danchin A."/>
        </authorList>
    </citation>
    <scope>NUCLEOTIDE SEQUENCE [LARGE SCALE GENOMIC DNA]</scope>
    <source>
        <strain>168</strain>
    </source>
</reference>
<proteinExistence type="predicted"/>